<protein>
    <recommendedName>
        <fullName evidence="1">N-(5'-phosphoribosyl)anthranilate isomerase</fullName>
        <shortName evidence="1">PRAI</shortName>
        <ecNumber evidence="1">5.3.1.24</ecNumber>
    </recommendedName>
</protein>
<gene>
    <name evidence="1" type="primary">trpF</name>
    <name type="ordered locus">Cthe_0871</name>
</gene>
<comment type="catalytic activity">
    <reaction evidence="1">
        <text>N-(5-phospho-beta-D-ribosyl)anthranilate = 1-(2-carboxyphenylamino)-1-deoxy-D-ribulose 5-phosphate</text>
        <dbReference type="Rhea" id="RHEA:21540"/>
        <dbReference type="ChEBI" id="CHEBI:18277"/>
        <dbReference type="ChEBI" id="CHEBI:58613"/>
        <dbReference type="EC" id="5.3.1.24"/>
    </reaction>
</comment>
<comment type="pathway">
    <text evidence="1">Amino-acid biosynthesis; L-tryptophan biosynthesis; L-tryptophan from chorismate: step 3/5.</text>
</comment>
<comment type="similarity">
    <text evidence="1">Belongs to the TrpF family.</text>
</comment>
<accession>A3DDS6</accession>
<sequence length="218" mass="24220">MTCVKICGLRRKEDIDYVNLYKPQFAGFVFAESRRKVSKETARMLVKALLPQIKSVGIFVNEKKETVAEIVKYTGLDCVQLHGDETPEYVEKLKELLGRITEKRIEIWKAVRVKNKESLEIISEFDVDAFLLDAYVEGSYGGAGAVFDWQLAADVAAGHERIILAGGLNPENVKTAVAKVKPYGVDVSSGVETDGFKDAEKIRDFIMKVREADGGVLS</sequence>
<feature type="chain" id="PRO_1000018590" description="N-(5'-phosphoribosyl)anthranilate isomerase">
    <location>
        <begin position="1"/>
        <end position="218"/>
    </location>
</feature>
<keyword id="KW-0028">Amino-acid biosynthesis</keyword>
<keyword id="KW-0057">Aromatic amino acid biosynthesis</keyword>
<keyword id="KW-0413">Isomerase</keyword>
<keyword id="KW-1185">Reference proteome</keyword>
<keyword id="KW-0822">Tryptophan biosynthesis</keyword>
<organism>
    <name type="scientific">Acetivibrio thermocellus (strain ATCC 27405 / DSM 1237 / JCM 9322 / NBRC 103400 / NCIMB 10682 / NRRL B-4536 / VPI 7372)</name>
    <name type="common">Clostridium thermocellum</name>
    <dbReference type="NCBI Taxonomy" id="203119"/>
    <lineage>
        <taxon>Bacteria</taxon>
        <taxon>Bacillati</taxon>
        <taxon>Bacillota</taxon>
        <taxon>Clostridia</taxon>
        <taxon>Eubacteriales</taxon>
        <taxon>Oscillospiraceae</taxon>
        <taxon>Acetivibrio</taxon>
    </lineage>
</organism>
<evidence type="ECO:0000255" key="1">
    <source>
        <dbReference type="HAMAP-Rule" id="MF_00135"/>
    </source>
</evidence>
<dbReference type="EC" id="5.3.1.24" evidence="1"/>
<dbReference type="EMBL" id="CP000568">
    <property type="protein sequence ID" value="ABN52105.1"/>
    <property type="molecule type" value="Genomic_DNA"/>
</dbReference>
<dbReference type="RefSeq" id="WP_003517200.1">
    <property type="nucleotide sequence ID" value="NC_009012.1"/>
</dbReference>
<dbReference type="SMR" id="A3DDS6"/>
<dbReference type="STRING" id="203119.Cthe_0871"/>
<dbReference type="GeneID" id="35804337"/>
<dbReference type="KEGG" id="cth:Cthe_0871"/>
<dbReference type="eggNOG" id="COG0135">
    <property type="taxonomic scope" value="Bacteria"/>
</dbReference>
<dbReference type="HOGENOM" id="CLU_076364_1_0_9"/>
<dbReference type="OrthoDB" id="9786954at2"/>
<dbReference type="UniPathway" id="UPA00035">
    <property type="reaction ID" value="UER00042"/>
</dbReference>
<dbReference type="Proteomes" id="UP000002145">
    <property type="component" value="Chromosome"/>
</dbReference>
<dbReference type="GO" id="GO:0004640">
    <property type="term" value="F:phosphoribosylanthranilate isomerase activity"/>
    <property type="evidence" value="ECO:0007669"/>
    <property type="project" value="UniProtKB-UniRule"/>
</dbReference>
<dbReference type="GO" id="GO:0000162">
    <property type="term" value="P:L-tryptophan biosynthetic process"/>
    <property type="evidence" value="ECO:0007669"/>
    <property type="project" value="UniProtKB-UniRule"/>
</dbReference>
<dbReference type="CDD" id="cd00405">
    <property type="entry name" value="PRAI"/>
    <property type="match status" value="1"/>
</dbReference>
<dbReference type="FunFam" id="3.20.20.70:FF:000075">
    <property type="entry name" value="Tryptophan biosynthesis protein TRP1"/>
    <property type="match status" value="1"/>
</dbReference>
<dbReference type="Gene3D" id="3.20.20.70">
    <property type="entry name" value="Aldolase class I"/>
    <property type="match status" value="1"/>
</dbReference>
<dbReference type="HAMAP" id="MF_00135">
    <property type="entry name" value="PRAI"/>
    <property type="match status" value="1"/>
</dbReference>
<dbReference type="InterPro" id="IPR013785">
    <property type="entry name" value="Aldolase_TIM"/>
</dbReference>
<dbReference type="InterPro" id="IPR001240">
    <property type="entry name" value="PRAI_dom"/>
</dbReference>
<dbReference type="InterPro" id="IPR011060">
    <property type="entry name" value="RibuloseP-bd_barrel"/>
</dbReference>
<dbReference type="InterPro" id="IPR044643">
    <property type="entry name" value="TrpF_fam"/>
</dbReference>
<dbReference type="PANTHER" id="PTHR42894">
    <property type="entry name" value="N-(5'-PHOSPHORIBOSYL)ANTHRANILATE ISOMERASE"/>
    <property type="match status" value="1"/>
</dbReference>
<dbReference type="PANTHER" id="PTHR42894:SF1">
    <property type="entry name" value="N-(5'-PHOSPHORIBOSYL)ANTHRANILATE ISOMERASE"/>
    <property type="match status" value="1"/>
</dbReference>
<dbReference type="Pfam" id="PF00697">
    <property type="entry name" value="PRAI"/>
    <property type="match status" value="1"/>
</dbReference>
<dbReference type="SUPFAM" id="SSF51366">
    <property type="entry name" value="Ribulose-phoshate binding barrel"/>
    <property type="match status" value="1"/>
</dbReference>
<name>TRPF_ACET2</name>
<proteinExistence type="inferred from homology"/>
<reference key="1">
    <citation type="submission" date="2007-02" db="EMBL/GenBank/DDBJ databases">
        <title>Complete sequence of Clostridium thermocellum ATCC 27405.</title>
        <authorList>
            <consortium name="US DOE Joint Genome Institute"/>
            <person name="Copeland A."/>
            <person name="Lucas S."/>
            <person name="Lapidus A."/>
            <person name="Barry K."/>
            <person name="Detter J.C."/>
            <person name="Glavina del Rio T."/>
            <person name="Hammon N."/>
            <person name="Israni S."/>
            <person name="Dalin E."/>
            <person name="Tice H."/>
            <person name="Pitluck S."/>
            <person name="Chertkov O."/>
            <person name="Brettin T."/>
            <person name="Bruce D."/>
            <person name="Han C."/>
            <person name="Tapia R."/>
            <person name="Gilna P."/>
            <person name="Schmutz J."/>
            <person name="Larimer F."/>
            <person name="Land M."/>
            <person name="Hauser L."/>
            <person name="Kyrpides N."/>
            <person name="Mikhailova N."/>
            <person name="Wu J.H.D."/>
            <person name="Newcomb M."/>
            <person name="Richardson P."/>
        </authorList>
    </citation>
    <scope>NUCLEOTIDE SEQUENCE [LARGE SCALE GENOMIC DNA]</scope>
    <source>
        <strain>ATCC 27405 / DSM 1237 / JCM 9322 / NBRC 103400 / NCIMB 10682 / NRRL B-4536 / VPI 7372</strain>
    </source>
</reference>